<name>FEN_META3</name>
<proteinExistence type="inferred from homology"/>
<feature type="chain" id="PRO_1000061320" description="Flap endonuclease 1">
    <location>
        <begin position="1"/>
        <end position="326"/>
    </location>
</feature>
<feature type="region of interest" description="N-domain">
    <location>
        <begin position="1"/>
        <end position="98"/>
    </location>
</feature>
<feature type="region of interest" description="I-domain">
    <location>
        <begin position="116"/>
        <end position="245"/>
    </location>
</feature>
<feature type="region of interest" description="Interaction with PCNA" evidence="2">
    <location>
        <begin position="318"/>
        <end position="326"/>
    </location>
</feature>
<feature type="binding site" evidence="2">
    <location>
        <position position="27"/>
    </location>
    <ligand>
        <name>Mg(2+)</name>
        <dbReference type="ChEBI" id="CHEBI:18420"/>
        <label>1</label>
    </ligand>
</feature>
<feature type="binding site" evidence="2">
    <location>
        <position position="80"/>
    </location>
    <ligand>
        <name>Mg(2+)</name>
        <dbReference type="ChEBI" id="CHEBI:18420"/>
        <label>1</label>
    </ligand>
</feature>
<feature type="binding site" evidence="2">
    <location>
        <position position="152"/>
    </location>
    <ligand>
        <name>Mg(2+)</name>
        <dbReference type="ChEBI" id="CHEBI:18420"/>
        <label>1</label>
    </ligand>
</feature>
<feature type="binding site" evidence="2">
    <location>
        <position position="154"/>
    </location>
    <ligand>
        <name>Mg(2+)</name>
        <dbReference type="ChEBI" id="CHEBI:18420"/>
        <label>1</label>
    </ligand>
</feature>
<feature type="binding site" evidence="2">
    <location>
        <position position="173"/>
    </location>
    <ligand>
        <name>Mg(2+)</name>
        <dbReference type="ChEBI" id="CHEBI:18420"/>
        <label>2</label>
    </ligand>
</feature>
<feature type="binding site" evidence="2">
    <location>
        <position position="175"/>
    </location>
    <ligand>
        <name>Mg(2+)</name>
        <dbReference type="ChEBI" id="CHEBI:18420"/>
        <label>2</label>
    </ligand>
</feature>
<feature type="binding site" evidence="2">
    <location>
        <position position="224"/>
    </location>
    <ligand>
        <name>Mg(2+)</name>
        <dbReference type="ChEBI" id="CHEBI:18420"/>
        <label>2</label>
    </ligand>
</feature>
<evidence type="ECO:0000250" key="1"/>
<evidence type="ECO:0000255" key="2">
    <source>
        <dbReference type="HAMAP-Rule" id="MF_00614"/>
    </source>
</evidence>
<comment type="function">
    <text evidence="1">Structure-specific nuclease with 5'-flap endonuclease and 5'-3' exonuclease activities involved in DNA replication and repair. During DNA replication, cleaves the 5'-overhanging flap structure that is generated by displacement synthesis when DNA polymerase encounters the 5'-end of a downstream Okazaki fragment. Binds the unpaired 3'-DNA end and kinks the DNA to facilitate 5' cleavage specificity. Cleaves one nucleotide into the double-stranded DNA from the junction in flap DNA, leaving a nick for ligation. Also involved in the base excision repair (BER) pathway. Acts as a genome stabilization factor that prevents flaps from equilibrating into structures that lead to duplications and deletions. Also possesses 5'-3' exonuclease activity on nicked or gapped double-stranded DNA (By similarity).</text>
</comment>
<comment type="cofactor">
    <cofactor evidence="2">
        <name>Mg(2+)</name>
        <dbReference type="ChEBI" id="CHEBI:18420"/>
    </cofactor>
    <text evidence="2">Binds 2 magnesium ions per subunit. They probably participate in the reaction catalyzed by the enzyme. May bind an additional third magnesium ion after substrate binding.</text>
</comment>
<comment type="subunit">
    <text evidence="2">Interacts with PCNA. PCNA stimulates the nuclease activity without altering cleavage specificity.</text>
</comment>
<comment type="similarity">
    <text evidence="2">Belongs to the XPG/RAD2 endonuclease family. FEN1 subfamily.</text>
</comment>
<keyword id="KW-0227">DNA damage</keyword>
<keyword id="KW-0234">DNA repair</keyword>
<keyword id="KW-0235">DNA replication</keyword>
<keyword id="KW-0255">Endonuclease</keyword>
<keyword id="KW-0269">Exonuclease</keyword>
<keyword id="KW-0378">Hydrolase</keyword>
<keyword id="KW-0460">Magnesium</keyword>
<keyword id="KW-0479">Metal-binding</keyword>
<keyword id="KW-0540">Nuclease</keyword>
<reference key="1">
    <citation type="submission" date="2007-06" db="EMBL/GenBank/DDBJ databases">
        <title>Complete sequence of Methanococcus aeolicus Nankai-3.</title>
        <authorList>
            <consortium name="US DOE Joint Genome Institute"/>
            <person name="Copeland A."/>
            <person name="Lucas S."/>
            <person name="Lapidus A."/>
            <person name="Barry K."/>
            <person name="Glavina del Rio T."/>
            <person name="Dalin E."/>
            <person name="Tice H."/>
            <person name="Pitluck S."/>
            <person name="Chain P."/>
            <person name="Malfatti S."/>
            <person name="Shin M."/>
            <person name="Vergez L."/>
            <person name="Schmutz J."/>
            <person name="Larimer F."/>
            <person name="Land M."/>
            <person name="Hauser L."/>
            <person name="Kyrpides N."/>
            <person name="Lykidis A."/>
            <person name="Sieprawska-Lupa M."/>
            <person name="Whitman W.B."/>
            <person name="Richardson P."/>
        </authorList>
    </citation>
    <scope>NUCLEOTIDE SEQUENCE [LARGE SCALE GENOMIC DNA]</scope>
    <source>
        <strain>ATCC BAA-1280 / DSM 17508 / OCM 812 / Nankai-3</strain>
    </source>
</reference>
<dbReference type="EC" id="3.1.-.-" evidence="2"/>
<dbReference type="EMBL" id="CP000743">
    <property type="protein sequence ID" value="ABR57068.1"/>
    <property type="molecule type" value="Genomic_DNA"/>
</dbReference>
<dbReference type="RefSeq" id="WP_011974200.1">
    <property type="nucleotide sequence ID" value="NC_009635.1"/>
</dbReference>
<dbReference type="SMR" id="A6UX46"/>
<dbReference type="STRING" id="419665.Maeo_1492"/>
<dbReference type="GeneID" id="5326506"/>
<dbReference type="KEGG" id="mae:Maeo_1492"/>
<dbReference type="eggNOG" id="arCOG04050">
    <property type="taxonomic scope" value="Archaea"/>
</dbReference>
<dbReference type="HOGENOM" id="CLU_032444_0_0_2"/>
<dbReference type="OrthoDB" id="9593at2157"/>
<dbReference type="Proteomes" id="UP000001106">
    <property type="component" value="Chromosome"/>
</dbReference>
<dbReference type="GO" id="GO:0008409">
    <property type="term" value="F:5'-3' exonuclease activity"/>
    <property type="evidence" value="ECO:0007669"/>
    <property type="project" value="UniProtKB-UniRule"/>
</dbReference>
<dbReference type="GO" id="GO:0017108">
    <property type="term" value="F:5'-flap endonuclease activity"/>
    <property type="evidence" value="ECO:0007669"/>
    <property type="project" value="UniProtKB-UniRule"/>
</dbReference>
<dbReference type="GO" id="GO:0003677">
    <property type="term" value="F:DNA binding"/>
    <property type="evidence" value="ECO:0007669"/>
    <property type="project" value="UniProtKB-UniRule"/>
</dbReference>
<dbReference type="GO" id="GO:0000287">
    <property type="term" value="F:magnesium ion binding"/>
    <property type="evidence" value="ECO:0007669"/>
    <property type="project" value="UniProtKB-UniRule"/>
</dbReference>
<dbReference type="GO" id="GO:0006281">
    <property type="term" value="P:DNA repair"/>
    <property type="evidence" value="ECO:0007669"/>
    <property type="project" value="UniProtKB-UniRule"/>
</dbReference>
<dbReference type="GO" id="GO:0043137">
    <property type="term" value="P:DNA replication, removal of RNA primer"/>
    <property type="evidence" value="ECO:0007669"/>
    <property type="project" value="UniProtKB-UniRule"/>
</dbReference>
<dbReference type="CDD" id="cd09867">
    <property type="entry name" value="PIN_FEN1"/>
    <property type="match status" value="1"/>
</dbReference>
<dbReference type="FunFam" id="3.40.50.1010:FF:000016">
    <property type="entry name" value="Flap endonuclease 1"/>
    <property type="match status" value="1"/>
</dbReference>
<dbReference type="Gene3D" id="1.10.150.20">
    <property type="entry name" value="5' to 3' exonuclease, C-terminal subdomain"/>
    <property type="match status" value="1"/>
</dbReference>
<dbReference type="Gene3D" id="3.40.50.1010">
    <property type="entry name" value="5'-nuclease"/>
    <property type="match status" value="1"/>
</dbReference>
<dbReference type="HAMAP" id="MF_00614">
    <property type="entry name" value="Fen"/>
    <property type="match status" value="1"/>
</dbReference>
<dbReference type="InterPro" id="IPR036279">
    <property type="entry name" value="5-3_exonuclease_C_sf"/>
</dbReference>
<dbReference type="InterPro" id="IPR023426">
    <property type="entry name" value="Flap_endonuc"/>
</dbReference>
<dbReference type="InterPro" id="IPR019973">
    <property type="entry name" value="Flap_endonuc_arc"/>
</dbReference>
<dbReference type="InterPro" id="IPR008918">
    <property type="entry name" value="HhH2"/>
</dbReference>
<dbReference type="InterPro" id="IPR029060">
    <property type="entry name" value="PIN-like_dom_sf"/>
</dbReference>
<dbReference type="InterPro" id="IPR006086">
    <property type="entry name" value="XPG-I_dom"/>
</dbReference>
<dbReference type="InterPro" id="IPR006084">
    <property type="entry name" value="XPG/Rad2"/>
</dbReference>
<dbReference type="InterPro" id="IPR006085">
    <property type="entry name" value="XPG_DNA_repair_N"/>
</dbReference>
<dbReference type="NCBIfam" id="TIGR03674">
    <property type="entry name" value="fen_arch"/>
    <property type="match status" value="1"/>
</dbReference>
<dbReference type="PANTHER" id="PTHR11081:SF9">
    <property type="entry name" value="FLAP ENDONUCLEASE 1"/>
    <property type="match status" value="1"/>
</dbReference>
<dbReference type="PANTHER" id="PTHR11081">
    <property type="entry name" value="FLAP ENDONUCLEASE FAMILY MEMBER"/>
    <property type="match status" value="1"/>
</dbReference>
<dbReference type="Pfam" id="PF00867">
    <property type="entry name" value="XPG_I"/>
    <property type="match status" value="1"/>
</dbReference>
<dbReference type="Pfam" id="PF00752">
    <property type="entry name" value="XPG_N"/>
    <property type="match status" value="1"/>
</dbReference>
<dbReference type="PRINTS" id="PR00853">
    <property type="entry name" value="XPGRADSUPER"/>
</dbReference>
<dbReference type="SMART" id="SM00279">
    <property type="entry name" value="HhH2"/>
    <property type="match status" value="1"/>
</dbReference>
<dbReference type="SMART" id="SM00484">
    <property type="entry name" value="XPGI"/>
    <property type="match status" value="1"/>
</dbReference>
<dbReference type="SMART" id="SM00485">
    <property type="entry name" value="XPGN"/>
    <property type="match status" value="1"/>
</dbReference>
<dbReference type="SUPFAM" id="SSF47807">
    <property type="entry name" value="5' to 3' exonuclease, C-terminal subdomain"/>
    <property type="match status" value="1"/>
</dbReference>
<dbReference type="SUPFAM" id="SSF88723">
    <property type="entry name" value="PIN domain-like"/>
    <property type="match status" value="1"/>
</dbReference>
<protein>
    <recommendedName>
        <fullName evidence="2">Flap endonuclease 1</fullName>
        <shortName evidence="2">FEN-1</shortName>
        <ecNumber evidence="2">3.1.-.-</ecNumber>
    </recommendedName>
    <alternativeName>
        <fullName evidence="2">Flap structure-specific endonuclease 1</fullName>
    </alternativeName>
</protein>
<sequence>MGVQFNDSIPKKNISITDLKNKTVAIDSMNIIYQFLSSIRLRDGAPLRNSKGEITSPYNGIFYKTIYLLNNEITPIWVFDGKPPELKLKTREERRKVKEKASKDYEIAKREENIEDMQKYAKRINYLEPNTVDNCKKLLKLMGIPYIDAPSEGEAQCAHMIKNGDAYCVVSQDYDALLYGAPRTVRNITASNKPLELMEIEDILKPLDISIDDLIDMAILIGTDYNIGGIKGIGPKKALTIIKNKKMNEYIKDIENYEEIKNIFKNPKVVDYTKEDIKLKSPNIEGLKEFLIEENDFSPNRILPSIKKLDKLLNEKRSQTSLDSWF</sequence>
<organism>
    <name type="scientific">Methanococcus aeolicus (strain ATCC BAA-1280 / DSM 17508 / OCM 812 / Nankai-3)</name>
    <dbReference type="NCBI Taxonomy" id="419665"/>
    <lineage>
        <taxon>Archaea</taxon>
        <taxon>Methanobacteriati</taxon>
        <taxon>Methanobacteriota</taxon>
        <taxon>Methanomada group</taxon>
        <taxon>Methanococci</taxon>
        <taxon>Methanococcales</taxon>
        <taxon>Methanococcaceae</taxon>
        <taxon>Methanococcus</taxon>
    </lineage>
</organism>
<gene>
    <name evidence="2" type="primary">fen</name>
    <name type="ordered locus">Maeo_1492</name>
</gene>
<accession>A6UX46</accession>